<dbReference type="EMBL" id="AP006840">
    <property type="protein sequence ID" value="BAD40323.1"/>
    <property type="molecule type" value="Genomic_DNA"/>
</dbReference>
<dbReference type="RefSeq" id="WP_011195469.1">
    <property type="nucleotide sequence ID" value="NC_006177.1"/>
</dbReference>
<dbReference type="SMR" id="Q67PS0"/>
<dbReference type="STRING" id="292459.STH1338"/>
<dbReference type="KEGG" id="sth:STH1338"/>
<dbReference type="eggNOG" id="COG2052">
    <property type="taxonomic scope" value="Bacteria"/>
</dbReference>
<dbReference type="HOGENOM" id="CLU_165326_0_0_9"/>
<dbReference type="OrthoDB" id="5432174at2"/>
<dbReference type="Proteomes" id="UP000000417">
    <property type="component" value="Chromosome"/>
</dbReference>
<dbReference type="HAMAP" id="MF_01503">
    <property type="entry name" value="RemA"/>
    <property type="match status" value="1"/>
</dbReference>
<dbReference type="InterPro" id="IPR007169">
    <property type="entry name" value="RemA-like"/>
</dbReference>
<dbReference type="NCBIfam" id="NF046064">
    <property type="entry name" value="MtxBflmRegRemA"/>
    <property type="match status" value="1"/>
</dbReference>
<dbReference type="NCBIfam" id="NF003315">
    <property type="entry name" value="PRK04323.1"/>
    <property type="match status" value="1"/>
</dbReference>
<dbReference type="PANTHER" id="PTHR38449:SF1">
    <property type="entry name" value="REGULATORY PROTEIN SSL2874-RELATED"/>
    <property type="match status" value="1"/>
</dbReference>
<dbReference type="PANTHER" id="PTHR38449">
    <property type="entry name" value="REGULATORY PROTEIN TM_1690-RELATED"/>
    <property type="match status" value="1"/>
</dbReference>
<dbReference type="Pfam" id="PF04025">
    <property type="entry name" value="RemA-like"/>
    <property type="match status" value="1"/>
</dbReference>
<proteinExistence type="inferred from homology"/>
<keyword id="KW-1185">Reference proteome</keyword>
<gene>
    <name type="ordered locus">STH1338</name>
</gene>
<accession>Q67PS0</accession>
<comment type="similarity">
    <text evidence="1">Belongs to the RemA family.</text>
</comment>
<name>Y1338_SYMTH</name>
<protein>
    <recommendedName>
        <fullName evidence="1">Putative regulatory protein STH1338</fullName>
    </recommendedName>
</protein>
<feature type="chain" id="PRO_0000050235" description="Putative regulatory protein STH1338">
    <location>
        <begin position="1"/>
        <end position="95"/>
    </location>
</feature>
<reference key="1">
    <citation type="journal article" date="2004" name="Nucleic Acids Res.">
        <title>Genome sequence of Symbiobacterium thermophilum, an uncultivable bacterium that depends on microbial commensalism.</title>
        <authorList>
            <person name="Ueda K."/>
            <person name="Yamashita A."/>
            <person name="Ishikawa J."/>
            <person name="Shimada M."/>
            <person name="Watsuji T."/>
            <person name="Morimura K."/>
            <person name="Ikeda H."/>
            <person name="Hattori M."/>
            <person name="Beppu T."/>
        </authorList>
    </citation>
    <scope>NUCLEOTIDE SEQUENCE [LARGE SCALE GENOMIC DNA]</scope>
    <source>
        <strain>DSM 24528 / JCM 14929 / IAM 14863 / T</strain>
    </source>
</reference>
<organism>
    <name type="scientific">Symbiobacterium thermophilum (strain DSM 24528 / JCM 14929 / IAM 14863 / T)</name>
    <dbReference type="NCBI Taxonomy" id="292459"/>
    <lineage>
        <taxon>Bacteria</taxon>
        <taxon>Bacillati</taxon>
        <taxon>Bacillota</taxon>
        <taxon>Clostridia</taxon>
        <taxon>Eubacteriales</taxon>
        <taxon>Symbiobacteriaceae</taxon>
        <taxon>Symbiobacterium</taxon>
    </lineage>
</organism>
<evidence type="ECO:0000255" key="1">
    <source>
        <dbReference type="HAMAP-Rule" id="MF_01503"/>
    </source>
</evidence>
<sequence>MGEIRLVNIGFGNIVSANRIVAIVSPESAPIKRIISEARERGTLIDATYGRRTRAVVITDSDHVVLSAVQPETVAHRLTARDASLAAAEEEEGEE</sequence>